<proteinExistence type="inferred from homology"/>
<sequence length="533" mass="58368">MNDFWQHCSALLERELTPQQYVTWIKPLAPVAFDAAANTLSIAAPNRFKLDWVKSQFSGRISDLARDFWNAPIEVQFVLDPKAGQRSPAGATPLAPRAPLPSANPAPVAPGPACAPAVDAHAPAPAGMNAATAAAVAAAQAAQAAQANAAALNADEAADLDLPSLTAHEAAAGRRTWRPGAANANSEAADSMYERSKLNPVLTFDNFVTGKANQLARAAAIQVADNPGISYNPLFLYGGVGLGKTHLIHAIGNQLLLDKPGARIRYIHAEQYVSDVVKAYQRKAFDDFKRYYHSLDLLLIDDIQFFSGKSRTQEEFFYAFEALVANKAQVIITSDTYPKEISGIDDRLISRFDSGLTVAIEPPELEMRVAILMRKAQSEGVSLSEDVAFFVAKHLRSNVRELEGALRKILAYSKFHGREITIELTKEALKDLLTVQNRQISVENIQKTVADFYNIKVADMYSKKRPANIARPRQIAMYLAKELTQKSLPEIGELFGGRDHTTVLHAVRKIADERGKDAQLNHELHVLEQTLKG</sequence>
<accession>A3NPW7</accession>
<evidence type="ECO:0000255" key="1">
    <source>
        <dbReference type="HAMAP-Rule" id="MF_00377"/>
    </source>
</evidence>
<evidence type="ECO:0000256" key="2">
    <source>
        <dbReference type="SAM" id="MobiDB-lite"/>
    </source>
</evidence>
<gene>
    <name evidence="1" type="primary">dnaA</name>
    <name type="ordered locus">BURPS1106A_0103</name>
</gene>
<dbReference type="EMBL" id="CP000572">
    <property type="protein sequence ID" value="ABN89077.1"/>
    <property type="molecule type" value="Genomic_DNA"/>
</dbReference>
<dbReference type="RefSeq" id="WP_004204805.1">
    <property type="nucleotide sequence ID" value="NC_009076.1"/>
</dbReference>
<dbReference type="SMR" id="A3NPW7"/>
<dbReference type="GeneID" id="93058586"/>
<dbReference type="KEGG" id="bpl:BURPS1106A_0103"/>
<dbReference type="HOGENOM" id="CLU_026910_0_1_4"/>
<dbReference type="Proteomes" id="UP000006738">
    <property type="component" value="Chromosome I"/>
</dbReference>
<dbReference type="GO" id="GO:0005737">
    <property type="term" value="C:cytoplasm"/>
    <property type="evidence" value="ECO:0007669"/>
    <property type="project" value="UniProtKB-SubCell"/>
</dbReference>
<dbReference type="GO" id="GO:0005886">
    <property type="term" value="C:plasma membrane"/>
    <property type="evidence" value="ECO:0007669"/>
    <property type="project" value="TreeGrafter"/>
</dbReference>
<dbReference type="GO" id="GO:0005524">
    <property type="term" value="F:ATP binding"/>
    <property type="evidence" value="ECO:0007669"/>
    <property type="project" value="UniProtKB-UniRule"/>
</dbReference>
<dbReference type="GO" id="GO:0016887">
    <property type="term" value="F:ATP hydrolysis activity"/>
    <property type="evidence" value="ECO:0007669"/>
    <property type="project" value="InterPro"/>
</dbReference>
<dbReference type="GO" id="GO:0003688">
    <property type="term" value="F:DNA replication origin binding"/>
    <property type="evidence" value="ECO:0007669"/>
    <property type="project" value="UniProtKB-UniRule"/>
</dbReference>
<dbReference type="GO" id="GO:0008289">
    <property type="term" value="F:lipid binding"/>
    <property type="evidence" value="ECO:0007669"/>
    <property type="project" value="UniProtKB-KW"/>
</dbReference>
<dbReference type="GO" id="GO:0006270">
    <property type="term" value="P:DNA replication initiation"/>
    <property type="evidence" value="ECO:0007669"/>
    <property type="project" value="UniProtKB-UniRule"/>
</dbReference>
<dbReference type="GO" id="GO:0006275">
    <property type="term" value="P:regulation of DNA replication"/>
    <property type="evidence" value="ECO:0007669"/>
    <property type="project" value="UniProtKB-UniRule"/>
</dbReference>
<dbReference type="CDD" id="cd00009">
    <property type="entry name" value="AAA"/>
    <property type="match status" value="1"/>
</dbReference>
<dbReference type="CDD" id="cd06571">
    <property type="entry name" value="Bac_DnaA_C"/>
    <property type="match status" value="1"/>
</dbReference>
<dbReference type="FunFam" id="1.10.8.60:FF:000003">
    <property type="entry name" value="Chromosomal replication initiator protein DnaA"/>
    <property type="match status" value="1"/>
</dbReference>
<dbReference type="FunFam" id="3.40.50.300:FF:000668">
    <property type="entry name" value="Chromosomal replication initiator protein DnaA"/>
    <property type="match status" value="1"/>
</dbReference>
<dbReference type="Gene3D" id="1.10.1750.10">
    <property type="match status" value="1"/>
</dbReference>
<dbReference type="Gene3D" id="1.10.8.60">
    <property type="match status" value="1"/>
</dbReference>
<dbReference type="Gene3D" id="3.30.300.180">
    <property type="match status" value="1"/>
</dbReference>
<dbReference type="Gene3D" id="3.40.50.300">
    <property type="entry name" value="P-loop containing nucleotide triphosphate hydrolases"/>
    <property type="match status" value="1"/>
</dbReference>
<dbReference type="HAMAP" id="MF_00377">
    <property type="entry name" value="DnaA_bact"/>
    <property type="match status" value="1"/>
</dbReference>
<dbReference type="InterPro" id="IPR003593">
    <property type="entry name" value="AAA+_ATPase"/>
</dbReference>
<dbReference type="InterPro" id="IPR001957">
    <property type="entry name" value="Chromosome_initiator_DnaA"/>
</dbReference>
<dbReference type="InterPro" id="IPR020591">
    <property type="entry name" value="Chromosome_initiator_DnaA-like"/>
</dbReference>
<dbReference type="InterPro" id="IPR018312">
    <property type="entry name" value="Chromosome_initiator_DnaA_CS"/>
</dbReference>
<dbReference type="InterPro" id="IPR013159">
    <property type="entry name" value="DnaA_C"/>
</dbReference>
<dbReference type="InterPro" id="IPR013317">
    <property type="entry name" value="DnaA_dom"/>
</dbReference>
<dbReference type="InterPro" id="IPR024633">
    <property type="entry name" value="DnaA_N_dom"/>
</dbReference>
<dbReference type="InterPro" id="IPR038454">
    <property type="entry name" value="DnaA_N_sf"/>
</dbReference>
<dbReference type="InterPro" id="IPR055199">
    <property type="entry name" value="Hda_lid"/>
</dbReference>
<dbReference type="InterPro" id="IPR027417">
    <property type="entry name" value="P-loop_NTPase"/>
</dbReference>
<dbReference type="InterPro" id="IPR010921">
    <property type="entry name" value="Trp_repressor/repl_initiator"/>
</dbReference>
<dbReference type="NCBIfam" id="TIGR00362">
    <property type="entry name" value="DnaA"/>
    <property type="match status" value="1"/>
</dbReference>
<dbReference type="PANTHER" id="PTHR30050">
    <property type="entry name" value="CHROMOSOMAL REPLICATION INITIATOR PROTEIN DNAA"/>
    <property type="match status" value="1"/>
</dbReference>
<dbReference type="PANTHER" id="PTHR30050:SF2">
    <property type="entry name" value="CHROMOSOMAL REPLICATION INITIATOR PROTEIN DNAA"/>
    <property type="match status" value="1"/>
</dbReference>
<dbReference type="Pfam" id="PF00308">
    <property type="entry name" value="Bac_DnaA"/>
    <property type="match status" value="1"/>
</dbReference>
<dbReference type="Pfam" id="PF08299">
    <property type="entry name" value="Bac_DnaA_C"/>
    <property type="match status" value="1"/>
</dbReference>
<dbReference type="Pfam" id="PF11638">
    <property type="entry name" value="DnaA_N"/>
    <property type="match status" value="1"/>
</dbReference>
<dbReference type="Pfam" id="PF22688">
    <property type="entry name" value="Hda_lid"/>
    <property type="match status" value="1"/>
</dbReference>
<dbReference type="PRINTS" id="PR00051">
    <property type="entry name" value="DNAA"/>
</dbReference>
<dbReference type="SMART" id="SM00382">
    <property type="entry name" value="AAA"/>
    <property type="match status" value="1"/>
</dbReference>
<dbReference type="SMART" id="SM00760">
    <property type="entry name" value="Bac_DnaA_C"/>
    <property type="match status" value="1"/>
</dbReference>
<dbReference type="SUPFAM" id="SSF52540">
    <property type="entry name" value="P-loop containing nucleoside triphosphate hydrolases"/>
    <property type="match status" value="1"/>
</dbReference>
<dbReference type="SUPFAM" id="SSF48295">
    <property type="entry name" value="TrpR-like"/>
    <property type="match status" value="1"/>
</dbReference>
<dbReference type="PROSITE" id="PS01008">
    <property type="entry name" value="DNAA"/>
    <property type="match status" value="1"/>
</dbReference>
<protein>
    <recommendedName>
        <fullName evidence="1">Chromosomal replication initiator protein DnaA</fullName>
    </recommendedName>
</protein>
<organism>
    <name type="scientific">Burkholderia pseudomallei (strain 1106a)</name>
    <dbReference type="NCBI Taxonomy" id="357348"/>
    <lineage>
        <taxon>Bacteria</taxon>
        <taxon>Pseudomonadati</taxon>
        <taxon>Pseudomonadota</taxon>
        <taxon>Betaproteobacteria</taxon>
        <taxon>Burkholderiales</taxon>
        <taxon>Burkholderiaceae</taxon>
        <taxon>Burkholderia</taxon>
        <taxon>pseudomallei group</taxon>
    </lineage>
</organism>
<reference key="1">
    <citation type="journal article" date="2010" name="Genome Biol. Evol.">
        <title>Continuing evolution of Burkholderia mallei through genome reduction and large-scale rearrangements.</title>
        <authorList>
            <person name="Losada L."/>
            <person name="Ronning C.M."/>
            <person name="DeShazer D."/>
            <person name="Woods D."/>
            <person name="Fedorova N."/>
            <person name="Kim H.S."/>
            <person name="Shabalina S.A."/>
            <person name="Pearson T.R."/>
            <person name="Brinkac L."/>
            <person name="Tan P."/>
            <person name="Nandi T."/>
            <person name="Crabtree J."/>
            <person name="Badger J."/>
            <person name="Beckstrom-Sternberg S."/>
            <person name="Saqib M."/>
            <person name="Schutzer S.E."/>
            <person name="Keim P."/>
            <person name="Nierman W.C."/>
        </authorList>
    </citation>
    <scope>NUCLEOTIDE SEQUENCE [LARGE SCALE GENOMIC DNA]</scope>
    <source>
        <strain>1106a</strain>
    </source>
</reference>
<keyword id="KW-0067">ATP-binding</keyword>
<keyword id="KW-0963">Cytoplasm</keyword>
<keyword id="KW-0235">DNA replication</keyword>
<keyword id="KW-0238">DNA-binding</keyword>
<keyword id="KW-0446">Lipid-binding</keyword>
<keyword id="KW-0547">Nucleotide-binding</keyword>
<name>DNAA_BURP0</name>
<feature type="chain" id="PRO_1000048618" description="Chromosomal replication initiator protein DnaA">
    <location>
        <begin position="1"/>
        <end position="533"/>
    </location>
</feature>
<feature type="region of interest" description="Domain I, interacts with DnaA modulators" evidence="1">
    <location>
        <begin position="1"/>
        <end position="72"/>
    </location>
</feature>
<feature type="region of interest" description="Domain II" evidence="1">
    <location>
        <begin position="72"/>
        <end position="196"/>
    </location>
</feature>
<feature type="region of interest" description="Disordered" evidence="2">
    <location>
        <begin position="83"/>
        <end position="113"/>
    </location>
</feature>
<feature type="region of interest" description="Domain III, AAA+ region" evidence="1">
    <location>
        <begin position="197"/>
        <end position="413"/>
    </location>
</feature>
<feature type="region of interest" description="Domain IV, binds dsDNA" evidence="1">
    <location>
        <begin position="414"/>
        <end position="533"/>
    </location>
</feature>
<feature type="compositionally biased region" description="Pro residues" evidence="2">
    <location>
        <begin position="96"/>
        <end position="110"/>
    </location>
</feature>
<feature type="binding site" evidence="1">
    <location>
        <position position="241"/>
    </location>
    <ligand>
        <name>ATP</name>
        <dbReference type="ChEBI" id="CHEBI:30616"/>
    </ligand>
</feature>
<feature type="binding site" evidence="1">
    <location>
        <position position="243"/>
    </location>
    <ligand>
        <name>ATP</name>
        <dbReference type="ChEBI" id="CHEBI:30616"/>
    </ligand>
</feature>
<feature type="binding site" evidence="1">
    <location>
        <position position="244"/>
    </location>
    <ligand>
        <name>ATP</name>
        <dbReference type="ChEBI" id="CHEBI:30616"/>
    </ligand>
</feature>
<feature type="binding site" evidence="1">
    <location>
        <position position="245"/>
    </location>
    <ligand>
        <name>ATP</name>
        <dbReference type="ChEBI" id="CHEBI:30616"/>
    </ligand>
</feature>
<comment type="function">
    <text evidence="1">Plays an essential role in the initiation and regulation of chromosomal replication. ATP-DnaA binds to the origin of replication (oriC) to initiate formation of the DNA replication initiation complex once per cell cycle. Binds the DnaA box (a 9 base pair repeat at the origin) and separates the double-stranded (ds)DNA. Forms a right-handed helical filament on oriC DNA; dsDNA binds to the exterior of the filament while single-stranded (ss)DNA is stabiized in the filament's interior. The ATP-DnaA-oriC complex binds and stabilizes one strand of the AT-rich DNA unwinding element (DUE), permitting loading of DNA polymerase. After initiation quickly degrades to an ADP-DnaA complex that is not apt for DNA replication. Binds acidic phospholipids.</text>
</comment>
<comment type="subunit">
    <text evidence="1">Oligomerizes as a right-handed, spiral filament on DNA at oriC.</text>
</comment>
<comment type="subcellular location">
    <subcellularLocation>
        <location evidence="1">Cytoplasm</location>
    </subcellularLocation>
</comment>
<comment type="domain">
    <text evidence="1">Domain I is involved in oligomerization and binding regulators, domain II is flexibile and of varying length in different bacteria, domain III forms the AAA+ region, while domain IV binds dsDNA.</text>
</comment>
<comment type="similarity">
    <text evidence="1">Belongs to the DnaA family.</text>
</comment>